<name>ZIPA_ENT38</name>
<reference key="1">
    <citation type="journal article" date="2010" name="PLoS Genet.">
        <title>Genome sequence of the plant growth promoting endophytic bacterium Enterobacter sp. 638.</title>
        <authorList>
            <person name="Taghavi S."/>
            <person name="van der Lelie D."/>
            <person name="Hoffman A."/>
            <person name="Zhang Y.B."/>
            <person name="Walla M.D."/>
            <person name="Vangronsveld J."/>
            <person name="Newman L."/>
            <person name="Monchy S."/>
        </authorList>
    </citation>
    <scope>NUCLEOTIDE SEQUENCE [LARGE SCALE GENOMIC DNA]</scope>
    <source>
        <strain>638</strain>
    </source>
</reference>
<accession>A4WD24</accession>
<keyword id="KW-0131">Cell cycle</keyword>
<keyword id="KW-0132">Cell division</keyword>
<keyword id="KW-0997">Cell inner membrane</keyword>
<keyword id="KW-1003">Cell membrane</keyword>
<keyword id="KW-0472">Membrane</keyword>
<keyword id="KW-0812">Transmembrane</keyword>
<keyword id="KW-1133">Transmembrane helix</keyword>
<comment type="function">
    <text evidence="1">Essential cell division protein that stabilizes the FtsZ protofilaments by cross-linking them and that serves as a cytoplasmic membrane anchor for the Z ring. Also required for the recruitment to the septal ring of downstream cell division proteins.</text>
</comment>
<comment type="subunit">
    <text evidence="1">Interacts with FtsZ via their C-terminal domains.</text>
</comment>
<comment type="subcellular location">
    <subcellularLocation>
        <location evidence="1">Cell inner membrane</location>
        <topology evidence="1">Single-pass type I membrane protein</topology>
    </subcellularLocation>
    <text evidence="1">Localizes to the Z ring in an FtsZ-dependent manner.</text>
</comment>
<comment type="similarity">
    <text evidence="1">Belongs to the ZipA family.</text>
</comment>
<feature type="chain" id="PRO_1000060868" description="Cell division protein ZipA">
    <location>
        <begin position="1"/>
        <end position="317"/>
    </location>
</feature>
<feature type="topological domain" description="Periplasmic" evidence="1">
    <location>
        <begin position="1"/>
        <end position="6"/>
    </location>
</feature>
<feature type="transmembrane region" description="Helical" evidence="1">
    <location>
        <begin position="7"/>
        <end position="27"/>
    </location>
</feature>
<feature type="topological domain" description="Cytoplasmic" evidence="1">
    <location>
        <begin position="28"/>
        <end position="317"/>
    </location>
</feature>
<feature type="region of interest" description="Disordered" evidence="2">
    <location>
        <begin position="37"/>
        <end position="174"/>
    </location>
</feature>
<feature type="compositionally biased region" description="Acidic residues" evidence="2">
    <location>
        <begin position="51"/>
        <end position="64"/>
    </location>
</feature>
<feature type="compositionally biased region" description="Low complexity" evidence="2">
    <location>
        <begin position="90"/>
        <end position="156"/>
    </location>
</feature>
<organism>
    <name type="scientific">Enterobacter sp. (strain 638)</name>
    <dbReference type="NCBI Taxonomy" id="399742"/>
    <lineage>
        <taxon>Bacteria</taxon>
        <taxon>Pseudomonadati</taxon>
        <taxon>Pseudomonadota</taxon>
        <taxon>Gammaproteobacteria</taxon>
        <taxon>Enterobacterales</taxon>
        <taxon>Enterobacteriaceae</taxon>
        <taxon>Enterobacter</taxon>
    </lineage>
</organism>
<sequence>MMQDLRLILIIVGAIAILALLVHGFWTSRKERSSMFRDRPLKRMKSSRNDDGDDDIEDNDDEGVGEVRVHRVNTAPGVGHGEQEAPRQSAQHQYQPPYASAQPRPQAPQPVEEPVRQPQTQPVHQQPVAQPQPVQQHQPVQPVQQPQPEPQTVQTQPAPPVEPEPVVEEAPVVEKPQRKETVIIMNVAAHHGTQLNGELLLNSIQQAGFKFGDMNIFHRHLSPDGSGPALFSLANMVNPGTFDPEMTGDFLTPGITIFMQVPSYGDELQNFKLMLQSAQHIADEVGGMVLDDQRRMMTPQKLREYQDRIREVKEANA</sequence>
<protein>
    <recommendedName>
        <fullName evidence="1">Cell division protein ZipA</fullName>
    </recommendedName>
</protein>
<gene>
    <name evidence="1" type="primary">zipA</name>
    <name type="ordered locus">Ent638_2940</name>
</gene>
<evidence type="ECO:0000255" key="1">
    <source>
        <dbReference type="HAMAP-Rule" id="MF_00509"/>
    </source>
</evidence>
<evidence type="ECO:0000256" key="2">
    <source>
        <dbReference type="SAM" id="MobiDB-lite"/>
    </source>
</evidence>
<dbReference type="EMBL" id="CP000653">
    <property type="protein sequence ID" value="ABP61604.1"/>
    <property type="molecule type" value="Genomic_DNA"/>
</dbReference>
<dbReference type="RefSeq" id="WP_015959937.1">
    <property type="nucleotide sequence ID" value="NC_009436.1"/>
</dbReference>
<dbReference type="SMR" id="A4WD24"/>
<dbReference type="STRING" id="399742.Ent638_2940"/>
<dbReference type="KEGG" id="ent:Ent638_2940"/>
<dbReference type="eggNOG" id="COG3115">
    <property type="taxonomic scope" value="Bacteria"/>
</dbReference>
<dbReference type="HOGENOM" id="CLU_030174_1_0_6"/>
<dbReference type="OrthoDB" id="7054914at2"/>
<dbReference type="Proteomes" id="UP000000230">
    <property type="component" value="Chromosome"/>
</dbReference>
<dbReference type="GO" id="GO:0032153">
    <property type="term" value="C:cell division site"/>
    <property type="evidence" value="ECO:0007669"/>
    <property type="project" value="UniProtKB-UniRule"/>
</dbReference>
<dbReference type="GO" id="GO:0005886">
    <property type="term" value="C:plasma membrane"/>
    <property type="evidence" value="ECO:0007669"/>
    <property type="project" value="UniProtKB-SubCell"/>
</dbReference>
<dbReference type="GO" id="GO:0000917">
    <property type="term" value="P:division septum assembly"/>
    <property type="evidence" value="ECO:0007669"/>
    <property type="project" value="TreeGrafter"/>
</dbReference>
<dbReference type="GO" id="GO:0043093">
    <property type="term" value="P:FtsZ-dependent cytokinesis"/>
    <property type="evidence" value="ECO:0007669"/>
    <property type="project" value="UniProtKB-UniRule"/>
</dbReference>
<dbReference type="CDD" id="cd00231">
    <property type="entry name" value="ZipA"/>
    <property type="match status" value="1"/>
</dbReference>
<dbReference type="FunFam" id="3.30.1400.10:FF:000001">
    <property type="entry name" value="Cell division protein ZipA"/>
    <property type="match status" value="1"/>
</dbReference>
<dbReference type="Gene3D" id="3.30.1400.10">
    <property type="entry name" value="ZipA, C-terminal FtsZ-binding domain"/>
    <property type="match status" value="1"/>
</dbReference>
<dbReference type="HAMAP" id="MF_00509">
    <property type="entry name" value="ZipA"/>
    <property type="match status" value="1"/>
</dbReference>
<dbReference type="InterPro" id="IPR011919">
    <property type="entry name" value="Cell_div_ZipA"/>
</dbReference>
<dbReference type="InterPro" id="IPR007449">
    <property type="entry name" value="ZipA_FtsZ-bd_C"/>
</dbReference>
<dbReference type="InterPro" id="IPR036765">
    <property type="entry name" value="ZipA_FtsZ-bd_C_sf"/>
</dbReference>
<dbReference type="NCBIfam" id="TIGR02205">
    <property type="entry name" value="septum_zipA"/>
    <property type="match status" value="1"/>
</dbReference>
<dbReference type="PANTHER" id="PTHR38685">
    <property type="entry name" value="CELL DIVISION PROTEIN ZIPA"/>
    <property type="match status" value="1"/>
</dbReference>
<dbReference type="PANTHER" id="PTHR38685:SF1">
    <property type="entry name" value="CELL DIVISION PROTEIN ZIPA"/>
    <property type="match status" value="1"/>
</dbReference>
<dbReference type="Pfam" id="PF04354">
    <property type="entry name" value="ZipA_C"/>
    <property type="match status" value="1"/>
</dbReference>
<dbReference type="SMART" id="SM00771">
    <property type="entry name" value="ZipA_C"/>
    <property type="match status" value="1"/>
</dbReference>
<dbReference type="SUPFAM" id="SSF64383">
    <property type="entry name" value="Cell-division protein ZipA, C-terminal domain"/>
    <property type="match status" value="1"/>
</dbReference>
<proteinExistence type="inferred from homology"/>